<sequence length="214" mass="24520">MDQKFYISSLLQEDTPSKEKPETSSESPIPTGSECSLNESSDTTLDQKMEPNKKMFNGTLDFNPWICHVSQQLAAQLSQNGKNRPGAPNQVPLLNMNVNQTMGNMWDPRLSWLYPYMSKSPQKRKGGQIRFTNEQTDALEHKFDSHKYLSPQERKKLAKSLSLSERQVKTWFQNRRAKWRRVRKDGEDEDEMPNGASARSLGQLQSSNPFLSHG</sequence>
<feature type="chain" id="PRO_0000456206" description="Homeobox protein HEX homolog pha-2">
    <location>
        <begin position="1"/>
        <end position="214"/>
    </location>
</feature>
<feature type="DNA-binding region" description="Homeobox" evidence="2">
    <location>
        <begin position="124"/>
        <end position="183"/>
    </location>
</feature>
<feature type="region of interest" description="Disordered" evidence="4">
    <location>
        <begin position="1"/>
        <end position="50"/>
    </location>
</feature>
<feature type="region of interest" description="Disordered" evidence="4">
    <location>
        <begin position="180"/>
        <end position="214"/>
    </location>
</feature>
<feature type="compositionally biased region" description="Low complexity" evidence="4">
    <location>
        <begin position="24"/>
        <end position="34"/>
    </location>
</feature>
<feature type="compositionally biased region" description="Polar residues" evidence="4">
    <location>
        <begin position="35"/>
        <end position="44"/>
    </location>
</feature>
<feature type="compositionally biased region" description="Polar residues" evidence="4">
    <location>
        <begin position="200"/>
        <end position="214"/>
    </location>
</feature>
<protein>
    <recommendedName>
        <fullName evidence="7">Homeobox protein HEX homolog pha-2</fullName>
    </recommendedName>
    <alternativeName>
        <fullName evidence="9">Defective pharyngeal development protein 2</fullName>
    </alternativeName>
</protein>
<evidence type="ECO:0000250" key="1">
    <source>
        <dbReference type="UniProtKB" id="P43120"/>
    </source>
</evidence>
<evidence type="ECO:0000255" key="2">
    <source>
        <dbReference type="PROSITE-ProRule" id="PRU00108"/>
    </source>
</evidence>
<evidence type="ECO:0000255" key="3">
    <source>
        <dbReference type="RuleBase" id="RU000682"/>
    </source>
</evidence>
<evidence type="ECO:0000256" key="4">
    <source>
        <dbReference type="SAM" id="MobiDB-lite"/>
    </source>
</evidence>
<evidence type="ECO:0000269" key="5">
    <source>
    </source>
</evidence>
<evidence type="ECO:0000269" key="6">
    <source>
    </source>
</evidence>
<evidence type="ECO:0000305" key="7"/>
<evidence type="ECO:0000312" key="8">
    <source>
        <dbReference type="Proteomes" id="UP000001940"/>
    </source>
</evidence>
<evidence type="ECO:0000312" key="9">
    <source>
        <dbReference type="WormBase" id="M6.3"/>
    </source>
</evidence>
<comment type="function">
    <text evidence="1 5 6">Transcriptional repressor (By similarity). Involved in pharyngeal development and required for the formation of the pharyngeal isthmus (PubMed:15282157, PubMed:16806153). Plays a role in modulating cytoskeleton in the muscle cells of the isthmus (PubMed:16806153). Regulates expression of the acetylcholinesterase genes ace-1 and ace-2 (PubMed:16806153). May regulate its own expression (PubMed:15282157).</text>
</comment>
<comment type="subcellular location">
    <subcellularLocation>
        <location evidence="2 3 5">Nucleus</location>
    </subcellularLocation>
</comment>
<comment type="developmental stage">
    <text evidence="5">Earliest expression in 4-8 cells of the pharyngeal primordium at around 280-300 minutes of embryonic development (PubMed:15282157). Expressed just before the comma stage (approximately 350 minutes) in two groups of pharyngeal primordium cells, persisting until the 3-fold stage (PubMed:15282157). At the 3-fold stage, expressed in several cells of the tail; expression continues in larvae and adults in several cells of the head, including at least two amphid neurons, intestinal cells, three rectal gland cells and 1-2 other unidentified rectal cells (PubMed:15282157).</text>
</comment>
<name>HHEXH_CAEEL</name>
<accession>Q21578</accession>
<organism evidence="8">
    <name type="scientific">Caenorhabditis elegans</name>
    <dbReference type="NCBI Taxonomy" id="6239"/>
    <lineage>
        <taxon>Eukaryota</taxon>
        <taxon>Metazoa</taxon>
        <taxon>Ecdysozoa</taxon>
        <taxon>Nematoda</taxon>
        <taxon>Chromadorea</taxon>
        <taxon>Rhabditida</taxon>
        <taxon>Rhabditina</taxon>
        <taxon>Rhabditomorpha</taxon>
        <taxon>Rhabditoidea</taxon>
        <taxon>Rhabditidae</taxon>
        <taxon>Peloderinae</taxon>
        <taxon>Caenorhabditis</taxon>
    </lineage>
</organism>
<gene>
    <name evidence="9" type="primary">pha-2</name>
    <name evidence="9" type="ORF">M6.3</name>
</gene>
<dbReference type="EMBL" id="BX284606">
    <property type="protein sequence ID" value="CCD69443.2"/>
    <property type="molecule type" value="Genomic_DNA"/>
</dbReference>
<dbReference type="RefSeq" id="NP_508131.4">
    <property type="nucleotide sequence ID" value="NM_075730.8"/>
</dbReference>
<dbReference type="SMR" id="Q21578"/>
<dbReference type="FunCoup" id="Q21578">
    <property type="interactions" value="189"/>
</dbReference>
<dbReference type="IntAct" id="Q21578">
    <property type="interactions" value="1"/>
</dbReference>
<dbReference type="STRING" id="6239.M6.3.1"/>
<dbReference type="PaxDb" id="6239-M6.3"/>
<dbReference type="EnsemblMetazoa" id="M6.3.1">
    <property type="protein sequence ID" value="M6.3.1"/>
    <property type="gene ID" value="WBGene00004011"/>
</dbReference>
<dbReference type="GeneID" id="187454"/>
<dbReference type="KEGG" id="cel:CELE_M6.3"/>
<dbReference type="UCSC" id="M6.3">
    <property type="organism name" value="c. elegans"/>
</dbReference>
<dbReference type="AGR" id="WB:WBGene00004011"/>
<dbReference type="CTD" id="187454"/>
<dbReference type="WormBase" id="M6.3">
    <property type="protein sequence ID" value="CE50536"/>
    <property type="gene ID" value="WBGene00004011"/>
    <property type="gene designation" value="pha-2"/>
</dbReference>
<dbReference type="eggNOG" id="KOG0483">
    <property type="taxonomic scope" value="Eukaryota"/>
</dbReference>
<dbReference type="GeneTree" id="ENSGT00940000164435"/>
<dbReference type="HOGENOM" id="CLU_1416315_0_0_1"/>
<dbReference type="InParanoid" id="Q21578"/>
<dbReference type="OMA" id="FNPWICH"/>
<dbReference type="OrthoDB" id="6159439at2759"/>
<dbReference type="PRO" id="PR:Q21578"/>
<dbReference type="Proteomes" id="UP000001940">
    <property type="component" value="Chromosome X"/>
</dbReference>
<dbReference type="Bgee" id="WBGene00004011">
    <property type="expression patterns" value="Expressed in pharyngeal muscle cell (C elegans) and 3 other cell types or tissues"/>
</dbReference>
<dbReference type="GO" id="GO:0005634">
    <property type="term" value="C:nucleus"/>
    <property type="evidence" value="ECO:0000314"/>
    <property type="project" value="WormBase"/>
</dbReference>
<dbReference type="GO" id="GO:0000981">
    <property type="term" value="F:DNA-binding transcription factor activity, RNA polymerase II-specific"/>
    <property type="evidence" value="ECO:0007669"/>
    <property type="project" value="InterPro"/>
</dbReference>
<dbReference type="GO" id="GO:0000978">
    <property type="term" value="F:RNA polymerase II cis-regulatory region sequence-specific DNA binding"/>
    <property type="evidence" value="ECO:0000318"/>
    <property type="project" value="GO_Central"/>
</dbReference>
<dbReference type="GO" id="GO:0030036">
    <property type="term" value="P:actin cytoskeleton organization"/>
    <property type="evidence" value="ECO:0000315"/>
    <property type="project" value="WormBase"/>
</dbReference>
<dbReference type="GO" id="GO:0009887">
    <property type="term" value="P:animal organ morphogenesis"/>
    <property type="evidence" value="ECO:0000315"/>
    <property type="project" value="WormBase"/>
</dbReference>
<dbReference type="GO" id="GO:0030154">
    <property type="term" value="P:cell differentiation"/>
    <property type="evidence" value="ECO:0000318"/>
    <property type="project" value="GO_Central"/>
</dbReference>
<dbReference type="GO" id="GO:0042755">
    <property type="term" value="P:eating behavior"/>
    <property type="evidence" value="ECO:0000315"/>
    <property type="project" value="WormBase"/>
</dbReference>
<dbReference type="GO" id="GO:0042694">
    <property type="term" value="P:muscle cell fate specification"/>
    <property type="evidence" value="ECO:0000315"/>
    <property type="project" value="WormBase"/>
</dbReference>
<dbReference type="GO" id="GO:0002119">
    <property type="term" value="P:nematode larval development"/>
    <property type="evidence" value="ECO:0000316"/>
    <property type="project" value="WormBase"/>
</dbReference>
<dbReference type="GO" id="GO:1905905">
    <property type="term" value="P:nematode pharyngeal gland morphogenesis"/>
    <property type="evidence" value="ECO:0000315"/>
    <property type="project" value="UniProtKB"/>
</dbReference>
<dbReference type="GO" id="GO:0160096">
    <property type="term" value="P:nematode pharyngeal muscle development"/>
    <property type="evidence" value="ECO:0000315"/>
    <property type="project" value="WormBase"/>
</dbReference>
<dbReference type="GO" id="GO:0040014">
    <property type="term" value="P:regulation of multicellular organism growth"/>
    <property type="evidence" value="ECO:0000315"/>
    <property type="project" value="WormBase"/>
</dbReference>
<dbReference type="GO" id="GO:0006357">
    <property type="term" value="P:regulation of transcription by RNA polymerase II"/>
    <property type="evidence" value="ECO:0000315"/>
    <property type="project" value="WormBase"/>
</dbReference>
<dbReference type="CDD" id="cd00086">
    <property type="entry name" value="homeodomain"/>
    <property type="match status" value="1"/>
</dbReference>
<dbReference type="FunFam" id="1.10.10.60:FF:000379">
    <property type="entry name" value="Hex homeobox"/>
    <property type="match status" value="1"/>
</dbReference>
<dbReference type="Gene3D" id="1.10.10.60">
    <property type="entry name" value="Homeodomain-like"/>
    <property type="match status" value="1"/>
</dbReference>
<dbReference type="InterPro" id="IPR001356">
    <property type="entry name" value="HD"/>
</dbReference>
<dbReference type="InterPro" id="IPR020479">
    <property type="entry name" value="HD_metazoa"/>
</dbReference>
<dbReference type="InterPro" id="IPR017970">
    <property type="entry name" value="Homeobox_CS"/>
</dbReference>
<dbReference type="InterPro" id="IPR051000">
    <property type="entry name" value="Homeobox_DNA-bind_prot"/>
</dbReference>
<dbReference type="InterPro" id="IPR009057">
    <property type="entry name" value="Homeodomain-like_sf"/>
</dbReference>
<dbReference type="InterPro" id="IPR000047">
    <property type="entry name" value="HTH_motif"/>
</dbReference>
<dbReference type="PANTHER" id="PTHR24324:SF5">
    <property type="entry name" value="HEMATOPOIETICALLY-EXPRESSED HOMEOBOX PROTEIN HHEX"/>
    <property type="match status" value="1"/>
</dbReference>
<dbReference type="PANTHER" id="PTHR24324">
    <property type="entry name" value="HOMEOBOX PROTEIN HHEX"/>
    <property type="match status" value="1"/>
</dbReference>
<dbReference type="Pfam" id="PF00046">
    <property type="entry name" value="Homeodomain"/>
    <property type="match status" value="1"/>
</dbReference>
<dbReference type="PRINTS" id="PR00024">
    <property type="entry name" value="HOMEOBOX"/>
</dbReference>
<dbReference type="PRINTS" id="PR00031">
    <property type="entry name" value="HTHREPRESSR"/>
</dbReference>
<dbReference type="SMART" id="SM00389">
    <property type="entry name" value="HOX"/>
    <property type="match status" value="1"/>
</dbReference>
<dbReference type="SUPFAM" id="SSF46689">
    <property type="entry name" value="Homeodomain-like"/>
    <property type="match status" value="1"/>
</dbReference>
<dbReference type="PROSITE" id="PS00027">
    <property type="entry name" value="HOMEOBOX_1"/>
    <property type="match status" value="1"/>
</dbReference>
<dbReference type="PROSITE" id="PS50071">
    <property type="entry name" value="HOMEOBOX_2"/>
    <property type="match status" value="1"/>
</dbReference>
<reference evidence="8" key="1">
    <citation type="journal article" date="1998" name="Science">
        <title>Genome sequence of the nematode C. elegans: a platform for investigating biology.</title>
        <authorList>
            <consortium name="The C. elegans sequencing consortium"/>
        </authorList>
    </citation>
    <scope>NUCLEOTIDE SEQUENCE [LARGE SCALE GENOMIC DNA]</scope>
    <source>
        <strain evidence="8">Bristol N2</strain>
    </source>
</reference>
<reference evidence="7" key="2">
    <citation type="journal article" date="2004" name="Dev. Biol.">
        <title>pha-2 encodes the C. elegans ortholog of the homeodomain protein HEX and is required for the formation of the pharyngeal isthmus.</title>
        <authorList>
            <person name="Moerck C."/>
            <person name="Rauthan M."/>
            <person name="Waagberg F."/>
            <person name="Pilon M."/>
        </authorList>
    </citation>
    <scope>FUNCTION</scope>
    <scope>SUBCELLULAR LOCATION</scope>
    <scope>DEVELOPMENTAL STAGE</scope>
</reference>
<reference evidence="7" key="3">
    <citation type="journal article" date="2006" name="Dev. Biol.">
        <title>Misexpression of acetylcholinesterases in the C. elegans pha-2 mutant accompanies ultrastructural defects in pharyngeal muscle cells.</title>
        <authorList>
            <person name="Moerck C."/>
            <person name="Axaeng C."/>
            <person name="Goksoer M."/>
            <person name="Pilon M."/>
        </authorList>
    </citation>
    <scope>FUNCTION</scope>
</reference>
<keyword id="KW-0238">DNA-binding</keyword>
<keyword id="KW-0371">Homeobox</keyword>
<keyword id="KW-0539">Nucleus</keyword>
<keyword id="KW-1185">Reference proteome</keyword>
<keyword id="KW-0804">Transcription</keyword>
<keyword id="KW-0805">Transcription regulation</keyword>
<proteinExistence type="evidence at transcript level"/>